<proteinExistence type="evidence at protein level"/>
<comment type="function">
    <text evidence="3 4 5">Component of serine palmitoyltransferase (SPT), which catalyzes the committed step in the synthesis of sphingolipids, the condensation of serine with palmitoyl CoA to form the long chain base 3-ketosphinganine. The heterodimer formed with LCB2 constitutes the catalytic core. Involved in the regulation of the programmed cell death (PCD) signaling pathway. Plays an important role during male gametogenesis and embryogenesis.</text>
</comment>
<comment type="catalytic activity">
    <reaction>
        <text>L-serine + hexadecanoyl-CoA + H(+) = 3-oxosphinganine + CO2 + CoA</text>
        <dbReference type="Rhea" id="RHEA:14761"/>
        <dbReference type="ChEBI" id="CHEBI:15378"/>
        <dbReference type="ChEBI" id="CHEBI:16526"/>
        <dbReference type="ChEBI" id="CHEBI:33384"/>
        <dbReference type="ChEBI" id="CHEBI:57287"/>
        <dbReference type="ChEBI" id="CHEBI:57379"/>
        <dbReference type="ChEBI" id="CHEBI:58299"/>
        <dbReference type="EC" id="2.3.1.50"/>
    </reaction>
</comment>
<comment type="cofactor">
    <cofactor evidence="1">
        <name>pyridoxal 5'-phosphate</name>
        <dbReference type="ChEBI" id="CHEBI:597326"/>
    </cofactor>
</comment>
<comment type="pathway">
    <text>Lipid metabolism; sphingolipid metabolism.</text>
</comment>
<comment type="subunit">
    <text evidence="3">Heterodimer with LCB2 (LCB2a or LCB2b). Component of the serine palmitoyltransferase (SPT) complex, composed of LCB1 and LCB2 (LCB2a or LCB2b).</text>
</comment>
<comment type="subcellular location">
    <subcellularLocation>
        <location evidence="3">Endoplasmic reticulum membrane</location>
        <topology evidence="3">Single-pass membrane protein</topology>
    </subcellularLocation>
</comment>
<comment type="tissue specificity">
    <text evidence="3">Ubiquitous.</text>
</comment>
<comment type="disruption phenotype">
    <text evidence="3 5">Defective Embryo and pollen lethality. RNAi mutants display plant size reduction, altered leaf morphology and increases in relative amounts of saturated sphingolipid long-chain bases.</text>
</comment>
<comment type="miscellaneous">
    <text>The fbr11-1 mutant is incapable of initiating programmed cell death (PCD) after induction by fumonisin B1 (FB1), a specific inhibitor of ceramide synthase.</text>
</comment>
<comment type="similarity">
    <text evidence="6">Belongs to the class-II pyridoxal-phosphate-dependent aminotransferase family.</text>
</comment>
<comment type="sequence caution" evidence="6">
    <conflict type="erroneous gene model prediction">
        <sequence resource="EMBL-CDS" id="CAB16844"/>
    </conflict>
</comment>
<comment type="sequence caution" evidence="6">
    <conflict type="erroneous gene model prediction">
        <sequence resource="EMBL-CDS" id="CAB80314"/>
    </conflict>
</comment>
<sequence>MASNLVEMFNAALNWVTMILESPSARVVLFGVPIRGHFFVEGLLGVVIIILLTRKSYKPPKRPLTEQEIDELCDEWVPEPLIPPITEDMKHEPPVLESAAGPHTTVNGKDVVNFASANYLGLIGHEKLLESCTSALEKYGVGSCGPRGFYGTIDVHLDCETRISKFLGTPDSILYSYGLSTMFSTIPCFCKKGDVIVADEGVHWGIQNGLQLSRSTIVYFKHNDMESLRITLEKIMTKYKRSKNLRRYIVAEAVYQNSGQIAPLDEIVKLKEKYRFRVILDESNSFGVLGRSGRGLAEHHSVPIEKIDVVTAAMGHALATEGGFCTGNARIIDYQRLSSSGYVFSASLPPYLASAAITAIDVIDQNPDMLVKLKQNVALLWKGLSDIKGMSLTSNRESPIVFLKLEKSSGSAKDDLLLLEKMADRALKEDSLLVVSSKRSFLDKCRLPVGIKLYVSAGHSESDLLKASESLKRLASELLLKS</sequence>
<organism>
    <name type="scientific">Arabidopsis thaliana</name>
    <name type="common">Mouse-ear cress</name>
    <dbReference type="NCBI Taxonomy" id="3702"/>
    <lineage>
        <taxon>Eukaryota</taxon>
        <taxon>Viridiplantae</taxon>
        <taxon>Streptophyta</taxon>
        <taxon>Embryophyta</taxon>
        <taxon>Tracheophyta</taxon>
        <taxon>Spermatophyta</taxon>
        <taxon>Magnoliopsida</taxon>
        <taxon>eudicotyledons</taxon>
        <taxon>Gunneridae</taxon>
        <taxon>Pentapetalae</taxon>
        <taxon>rosids</taxon>
        <taxon>malvids</taxon>
        <taxon>Brassicales</taxon>
        <taxon>Brassicaceae</taxon>
        <taxon>Camelineae</taxon>
        <taxon>Arabidopsis</taxon>
    </lineage>
</organism>
<protein>
    <recommendedName>
        <fullName>Long chain base biosynthesis protein 1</fullName>
        <shortName>AtLCB1</shortName>
        <ecNumber>2.3.1.50</ecNumber>
    </recommendedName>
    <alternativeName>
        <fullName>Protein EMBRYO DEFECTIVE 2779</fullName>
    </alternativeName>
    <alternativeName>
        <fullName>Protein FUMONISIN B1 RESISTANT 11</fullName>
    </alternativeName>
</protein>
<dbReference type="EC" id="2.3.1.50"/>
<dbReference type="EMBL" id="AB063254">
    <property type="protein sequence ID" value="BAB60898.1"/>
    <property type="molecule type" value="mRNA"/>
</dbReference>
<dbReference type="EMBL" id="Z99708">
    <property type="protein sequence ID" value="CAB16844.1"/>
    <property type="status" value="ALT_SEQ"/>
    <property type="molecule type" value="Genomic_DNA"/>
</dbReference>
<dbReference type="EMBL" id="AL161589">
    <property type="protein sequence ID" value="CAB80314.1"/>
    <property type="status" value="ALT_SEQ"/>
    <property type="molecule type" value="Genomic_DNA"/>
</dbReference>
<dbReference type="EMBL" id="CP002687">
    <property type="protein sequence ID" value="AEE86660.1"/>
    <property type="molecule type" value="Genomic_DNA"/>
</dbReference>
<dbReference type="EMBL" id="CP002687">
    <property type="protein sequence ID" value="AEE86661.1"/>
    <property type="molecule type" value="Genomic_DNA"/>
</dbReference>
<dbReference type="EMBL" id="AY120759">
    <property type="protein sequence ID" value="AAM53317.1"/>
    <property type="molecule type" value="mRNA"/>
</dbReference>
<dbReference type="EMBL" id="BT000131">
    <property type="protein sequence ID" value="AAN15450.1"/>
    <property type="molecule type" value="mRNA"/>
</dbReference>
<dbReference type="EMBL" id="AK317450">
    <property type="protein sequence ID" value="BAH20117.1"/>
    <property type="molecule type" value="mRNA"/>
</dbReference>
<dbReference type="PIR" id="F85430">
    <property type="entry name" value="F85430"/>
</dbReference>
<dbReference type="RefSeq" id="NP_001031796.1">
    <property type="nucleotide sequence ID" value="NM_001036719.2"/>
</dbReference>
<dbReference type="RefSeq" id="NP_568005.1">
    <property type="nucleotide sequence ID" value="NM_119811.3"/>
</dbReference>
<dbReference type="PDB" id="7YJK">
    <property type="method" value="EM"/>
    <property type="resolution" value="3.20 A"/>
    <property type="chains" value="A/E=1-482"/>
</dbReference>
<dbReference type="PDB" id="8IAJ">
    <property type="method" value="EM"/>
    <property type="resolution" value="3.10 A"/>
    <property type="chains" value="A/E=1-81"/>
</dbReference>
<dbReference type="PDB" id="8IAK">
    <property type="method" value="EM"/>
    <property type="resolution" value="3.10 A"/>
    <property type="chains" value="A/E=1-81"/>
</dbReference>
<dbReference type="PDB" id="8IAM">
    <property type="method" value="EM"/>
    <property type="resolution" value="3.10 A"/>
    <property type="chains" value="A/E=1-81"/>
</dbReference>
<dbReference type="PDBsum" id="7YJK"/>
<dbReference type="PDBsum" id="8IAJ"/>
<dbReference type="PDBsum" id="8IAK"/>
<dbReference type="PDBsum" id="8IAM"/>
<dbReference type="EMDB" id="EMD-33873"/>
<dbReference type="EMDB" id="EMD-33874"/>
<dbReference type="EMDB" id="EMD-33875"/>
<dbReference type="EMDB" id="EMD-33876"/>
<dbReference type="SMR" id="Q94IB8"/>
<dbReference type="BioGRID" id="15082">
    <property type="interactions" value="7"/>
</dbReference>
<dbReference type="FunCoup" id="Q94IB8">
    <property type="interactions" value="4817"/>
</dbReference>
<dbReference type="IntAct" id="Q94IB8">
    <property type="interactions" value="2"/>
</dbReference>
<dbReference type="STRING" id="3702.Q94IB8"/>
<dbReference type="PaxDb" id="3702-AT4G36480.1"/>
<dbReference type="ProteomicsDB" id="250753"/>
<dbReference type="EnsemblPlants" id="AT4G36480.1">
    <property type="protein sequence ID" value="AT4G36480.1"/>
    <property type="gene ID" value="AT4G36480"/>
</dbReference>
<dbReference type="EnsemblPlants" id="AT4G36480.2">
    <property type="protein sequence ID" value="AT4G36480.2"/>
    <property type="gene ID" value="AT4G36480"/>
</dbReference>
<dbReference type="GeneID" id="829800"/>
<dbReference type="Gramene" id="AT4G36480.1">
    <property type="protein sequence ID" value="AT4G36480.1"/>
    <property type="gene ID" value="AT4G36480"/>
</dbReference>
<dbReference type="Gramene" id="AT4G36480.2">
    <property type="protein sequence ID" value="AT4G36480.2"/>
    <property type="gene ID" value="AT4G36480"/>
</dbReference>
<dbReference type="KEGG" id="ath:AT4G36480"/>
<dbReference type="Araport" id="AT4G36480"/>
<dbReference type="TAIR" id="AT4G36480">
    <property type="gene designation" value="LCB1"/>
</dbReference>
<dbReference type="eggNOG" id="KOG1358">
    <property type="taxonomic scope" value="Eukaryota"/>
</dbReference>
<dbReference type="HOGENOM" id="CLU_015846_0_1_1"/>
<dbReference type="InParanoid" id="Q94IB8"/>
<dbReference type="OMA" id="LTKYGCG"/>
<dbReference type="OrthoDB" id="3168162at2759"/>
<dbReference type="PhylomeDB" id="Q94IB8"/>
<dbReference type="BioCyc" id="ARA:AT4G36480-MONOMER"/>
<dbReference type="BioCyc" id="MetaCyc:AT4G36480-MONOMER"/>
<dbReference type="BRENDA" id="2.3.1.50">
    <property type="organism ID" value="399"/>
</dbReference>
<dbReference type="UniPathway" id="UPA00222"/>
<dbReference type="PRO" id="PR:Q94IB8"/>
<dbReference type="Proteomes" id="UP000006548">
    <property type="component" value="Chromosome 4"/>
</dbReference>
<dbReference type="ExpressionAtlas" id="Q94IB8">
    <property type="expression patterns" value="baseline and differential"/>
</dbReference>
<dbReference type="GO" id="GO:0005783">
    <property type="term" value="C:endoplasmic reticulum"/>
    <property type="evidence" value="ECO:0000314"/>
    <property type="project" value="TAIR"/>
</dbReference>
<dbReference type="GO" id="GO:0005789">
    <property type="term" value="C:endoplasmic reticulum membrane"/>
    <property type="evidence" value="ECO:0007669"/>
    <property type="project" value="UniProtKB-SubCell"/>
</dbReference>
<dbReference type="GO" id="GO:0030170">
    <property type="term" value="F:pyridoxal phosphate binding"/>
    <property type="evidence" value="ECO:0007669"/>
    <property type="project" value="InterPro"/>
</dbReference>
<dbReference type="GO" id="GO:0004758">
    <property type="term" value="F:serine C-palmitoyltransferase activity"/>
    <property type="evidence" value="ECO:0007669"/>
    <property type="project" value="UniProtKB-EC"/>
</dbReference>
<dbReference type="GO" id="GO:0009793">
    <property type="term" value="P:embryo development ending in seed dormancy"/>
    <property type="evidence" value="ECO:0000315"/>
    <property type="project" value="TAIR"/>
</dbReference>
<dbReference type="GO" id="GO:0009825">
    <property type="term" value="P:multidimensional cell growth"/>
    <property type="evidence" value="ECO:0000315"/>
    <property type="project" value="TAIR"/>
</dbReference>
<dbReference type="GO" id="GO:0043067">
    <property type="term" value="P:regulation of programmed cell death"/>
    <property type="evidence" value="ECO:0000315"/>
    <property type="project" value="UniProtKB"/>
</dbReference>
<dbReference type="GO" id="GO:0030148">
    <property type="term" value="P:sphingolipid biosynthetic process"/>
    <property type="evidence" value="ECO:0000304"/>
    <property type="project" value="TAIR"/>
</dbReference>
<dbReference type="FunFam" id="3.40.640.10:FF:000049">
    <property type="entry name" value="serine palmitoyltransferase 1 isoform X1"/>
    <property type="match status" value="1"/>
</dbReference>
<dbReference type="Gene3D" id="3.90.1150.10">
    <property type="entry name" value="Aspartate Aminotransferase, domain 1"/>
    <property type="match status" value="1"/>
</dbReference>
<dbReference type="Gene3D" id="3.40.640.10">
    <property type="entry name" value="Type I PLP-dependent aspartate aminotransferase-like (Major domain)"/>
    <property type="match status" value="1"/>
</dbReference>
<dbReference type="InterPro" id="IPR004839">
    <property type="entry name" value="Aminotransferase_I/II_large"/>
</dbReference>
<dbReference type="InterPro" id="IPR050087">
    <property type="entry name" value="AON_synthase_class-II"/>
</dbReference>
<dbReference type="InterPro" id="IPR015424">
    <property type="entry name" value="PyrdxlP-dep_Trfase"/>
</dbReference>
<dbReference type="InterPro" id="IPR015421">
    <property type="entry name" value="PyrdxlP-dep_Trfase_major"/>
</dbReference>
<dbReference type="InterPro" id="IPR015422">
    <property type="entry name" value="PyrdxlP-dep_Trfase_small"/>
</dbReference>
<dbReference type="PANTHER" id="PTHR13693">
    <property type="entry name" value="CLASS II AMINOTRANSFERASE/8-AMINO-7-OXONONANOATE SYNTHASE"/>
    <property type="match status" value="1"/>
</dbReference>
<dbReference type="PANTHER" id="PTHR13693:SF2">
    <property type="entry name" value="SERINE PALMITOYLTRANSFERASE 1"/>
    <property type="match status" value="1"/>
</dbReference>
<dbReference type="Pfam" id="PF00155">
    <property type="entry name" value="Aminotran_1_2"/>
    <property type="match status" value="1"/>
</dbReference>
<dbReference type="SUPFAM" id="SSF53383">
    <property type="entry name" value="PLP-dependent transferases"/>
    <property type="match status" value="1"/>
</dbReference>
<name>SPTC1_ARATH</name>
<gene>
    <name type="primary">LCB1</name>
    <name type="synonym">EMB2779</name>
    <name type="synonym">FBR11</name>
    <name type="ordered locus">At4g36480</name>
    <name type="ORF">AP22</name>
    <name type="ORF">C7A10.880</name>
</gene>
<keyword id="KW-0002">3D-structure</keyword>
<keyword id="KW-0012">Acyltransferase</keyword>
<keyword id="KW-0053">Apoptosis</keyword>
<keyword id="KW-0256">Endoplasmic reticulum</keyword>
<keyword id="KW-0443">Lipid metabolism</keyword>
<keyword id="KW-0472">Membrane</keyword>
<keyword id="KW-0663">Pyridoxal phosphate</keyword>
<keyword id="KW-1185">Reference proteome</keyword>
<keyword id="KW-0746">Sphingolipid metabolism</keyword>
<keyword id="KW-0808">Transferase</keyword>
<keyword id="KW-0812">Transmembrane</keyword>
<keyword id="KW-1133">Transmembrane helix</keyword>
<feature type="chain" id="PRO_0000419144" description="Long chain base biosynthesis protein 1">
    <location>
        <begin position="1"/>
        <end position="482"/>
    </location>
</feature>
<feature type="transmembrane region" description="Helical" evidence="2">
    <location>
        <begin position="32"/>
        <end position="52"/>
    </location>
</feature>
<feature type="sequence conflict" description="In Ref. 6; BAH20117." evidence="6" ref="6">
    <original>K</original>
    <variation>E</variation>
    <location>
        <position position="306"/>
    </location>
</feature>
<feature type="helix" evidence="7">
    <location>
        <begin position="38"/>
        <end position="51"/>
    </location>
</feature>
<feature type="helix" evidence="7">
    <location>
        <begin position="68"/>
        <end position="75"/>
    </location>
</feature>
<feature type="strand" evidence="7">
    <location>
        <begin position="96"/>
        <end position="98"/>
    </location>
</feature>
<feature type="strand" evidence="7">
    <location>
        <begin position="101"/>
        <end position="106"/>
    </location>
</feature>
<feature type="strand" evidence="7">
    <location>
        <begin position="109"/>
        <end position="112"/>
    </location>
</feature>
<feature type="helix" evidence="7">
    <location>
        <begin position="128"/>
        <end position="136"/>
    </location>
</feature>
<feature type="turn" evidence="7">
    <location>
        <begin position="147"/>
        <end position="150"/>
    </location>
</feature>
<feature type="helix" evidence="7">
    <location>
        <begin position="154"/>
        <end position="167"/>
    </location>
</feature>
<feature type="strand" evidence="7">
    <location>
        <begin position="170"/>
        <end position="176"/>
    </location>
</feature>
<feature type="helix" evidence="7">
    <location>
        <begin position="178"/>
        <end position="181"/>
    </location>
</feature>
<feature type="turn" evidence="7">
    <location>
        <begin position="182"/>
        <end position="185"/>
    </location>
</feature>
<feature type="helix" evidence="7">
    <location>
        <begin position="186"/>
        <end position="189"/>
    </location>
</feature>
<feature type="strand" evidence="7">
    <location>
        <begin position="195"/>
        <end position="197"/>
    </location>
</feature>
<feature type="helix" evidence="7">
    <location>
        <begin position="204"/>
        <end position="212"/>
    </location>
</feature>
<feature type="strand" evidence="7">
    <location>
        <begin position="216"/>
        <end position="218"/>
    </location>
</feature>
<feature type="helix" evidence="7">
    <location>
        <begin position="225"/>
        <end position="238"/>
    </location>
</feature>
<feature type="strand" evidence="7">
    <location>
        <begin position="239"/>
        <end position="241"/>
    </location>
</feature>
<feature type="strand" evidence="7">
    <location>
        <begin position="247"/>
        <end position="254"/>
    </location>
</feature>
<feature type="turn" evidence="7">
    <location>
        <begin position="256"/>
        <end position="258"/>
    </location>
</feature>
<feature type="helix" evidence="7">
    <location>
        <begin position="266"/>
        <end position="274"/>
    </location>
</feature>
<feature type="strand" evidence="7">
    <location>
        <begin position="277"/>
        <end position="281"/>
    </location>
</feature>
<feature type="turn" evidence="7">
    <location>
        <begin position="283"/>
        <end position="288"/>
    </location>
</feature>
<feature type="strand" evidence="7">
    <location>
        <begin position="289"/>
        <end position="293"/>
    </location>
</feature>
<feature type="helix" evidence="7">
    <location>
        <begin position="296"/>
        <end position="300"/>
    </location>
</feature>
<feature type="helix" evidence="7">
    <location>
        <begin position="304"/>
        <end position="306"/>
    </location>
</feature>
<feature type="strand" evidence="7">
    <location>
        <begin position="308"/>
        <end position="313"/>
    </location>
</feature>
<feature type="strand" evidence="7">
    <location>
        <begin position="316"/>
        <end position="320"/>
    </location>
</feature>
<feature type="strand" evidence="7">
    <location>
        <begin position="323"/>
        <end position="327"/>
    </location>
</feature>
<feature type="helix" evidence="7">
    <location>
        <begin position="329"/>
        <end position="334"/>
    </location>
</feature>
<feature type="turn" evidence="7">
    <location>
        <begin position="335"/>
        <end position="337"/>
    </location>
</feature>
<feature type="turn" evidence="7">
    <location>
        <begin position="341"/>
        <end position="343"/>
    </location>
</feature>
<feature type="strand" evidence="7">
    <location>
        <begin position="344"/>
        <end position="346"/>
    </location>
</feature>
<feature type="helix" evidence="7">
    <location>
        <begin position="350"/>
        <end position="365"/>
    </location>
</feature>
<feature type="helix" evidence="7">
    <location>
        <begin position="368"/>
        <end position="381"/>
    </location>
</feature>
<feature type="turn" evidence="7">
    <location>
        <begin position="382"/>
        <end position="386"/>
    </location>
</feature>
<feature type="strand" evidence="7">
    <location>
        <begin position="388"/>
        <end position="391"/>
    </location>
</feature>
<feature type="strand" evidence="7">
    <location>
        <begin position="396"/>
        <end position="400"/>
    </location>
</feature>
<feature type="strand" evidence="7">
    <location>
        <begin position="404"/>
        <end position="407"/>
    </location>
</feature>
<feature type="helix" evidence="7">
    <location>
        <begin position="412"/>
        <end position="428"/>
    </location>
</feature>
<feature type="strand" evidence="7">
    <location>
        <begin position="450"/>
        <end position="452"/>
    </location>
</feature>
<feature type="helix" evidence="7">
    <location>
        <begin position="461"/>
        <end position="476"/>
    </location>
</feature>
<reference key="1">
    <citation type="submission" date="2001-06" db="EMBL/GenBank/DDBJ databases">
        <title>Cloning and characterization of a cDNA encoding a subunit of serine palmitoyltransferase.</title>
        <authorList>
            <person name="Mori J."/>
            <person name="Tamura K."/>
            <person name="Nishiura H."/>
            <person name="Morimoto Y."/>
            <person name="Imai H."/>
        </authorList>
    </citation>
    <scope>NUCLEOTIDE SEQUENCE [MRNA]</scope>
</reference>
<reference key="2">
    <citation type="journal article" date="1998" name="Nature">
        <title>Analysis of 1.9 Mb of contiguous sequence from chromosome 4 of Arabidopsis thaliana.</title>
        <authorList>
            <person name="Bevan M."/>
            <person name="Bancroft I."/>
            <person name="Bent E."/>
            <person name="Love K."/>
            <person name="Goodman H.M."/>
            <person name="Dean C."/>
            <person name="Bergkamp R."/>
            <person name="Dirkse W."/>
            <person name="van Staveren M."/>
            <person name="Stiekema W."/>
            <person name="Drost L."/>
            <person name="Ridley P."/>
            <person name="Hudson S.-A."/>
            <person name="Patel K."/>
            <person name="Murphy G."/>
            <person name="Piffanelli P."/>
            <person name="Wedler H."/>
            <person name="Wedler E."/>
            <person name="Wambutt R."/>
            <person name="Weitzenegger T."/>
            <person name="Pohl T."/>
            <person name="Terryn N."/>
            <person name="Gielen J."/>
            <person name="Villarroel R."/>
            <person name="De Clercq R."/>
            <person name="van Montagu M."/>
            <person name="Lecharny A."/>
            <person name="Aubourg S."/>
            <person name="Gy I."/>
            <person name="Kreis M."/>
            <person name="Lao N."/>
            <person name="Kavanagh T."/>
            <person name="Hempel S."/>
            <person name="Kotter P."/>
            <person name="Entian K.-D."/>
            <person name="Rieger M."/>
            <person name="Schaefer M."/>
            <person name="Funk B."/>
            <person name="Mueller-Auer S."/>
            <person name="Silvey M."/>
            <person name="James R."/>
            <person name="Monfort A."/>
            <person name="Pons A."/>
            <person name="Puigdomenech P."/>
            <person name="Douka A."/>
            <person name="Voukelatou E."/>
            <person name="Milioni D."/>
            <person name="Hatzopoulos P."/>
            <person name="Piravandi E."/>
            <person name="Obermaier B."/>
            <person name="Hilbert H."/>
            <person name="Duesterhoeft A."/>
            <person name="Moores T."/>
            <person name="Jones J.D.G."/>
            <person name="Eneva T."/>
            <person name="Palme K."/>
            <person name="Benes V."/>
            <person name="Rechmann S."/>
            <person name="Ansorge W."/>
            <person name="Cooke R."/>
            <person name="Berger C."/>
            <person name="Delseny M."/>
            <person name="Voet M."/>
            <person name="Volckaert G."/>
            <person name="Mewes H.-W."/>
            <person name="Klosterman S."/>
            <person name="Schueller C."/>
            <person name="Chalwatzis N."/>
        </authorList>
    </citation>
    <scope>NUCLEOTIDE SEQUENCE [LARGE SCALE GENOMIC DNA]</scope>
    <source>
        <strain>cv. Columbia</strain>
    </source>
</reference>
<reference key="3">
    <citation type="journal article" date="1999" name="Nature">
        <title>Sequence and analysis of chromosome 4 of the plant Arabidopsis thaliana.</title>
        <authorList>
            <person name="Mayer K.F.X."/>
            <person name="Schueller C."/>
            <person name="Wambutt R."/>
            <person name="Murphy G."/>
            <person name="Volckaert G."/>
            <person name="Pohl T."/>
            <person name="Duesterhoeft A."/>
            <person name="Stiekema W."/>
            <person name="Entian K.-D."/>
            <person name="Terryn N."/>
            <person name="Harris B."/>
            <person name="Ansorge W."/>
            <person name="Brandt P."/>
            <person name="Grivell L.A."/>
            <person name="Rieger M."/>
            <person name="Weichselgartner M."/>
            <person name="de Simone V."/>
            <person name="Obermaier B."/>
            <person name="Mache R."/>
            <person name="Mueller M."/>
            <person name="Kreis M."/>
            <person name="Delseny M."/>
            <person name="Puigdomenech P."/>
            <person name="Watson M."/>
            <person name="Schmidtheini T."/>
            <person name="Reichert B."/>
            <person name="Portetelle D."/>
            <person name="Perez-Alonso M."/>
            <person name="Boutry M."/>
            <person name="Bancroft I."/>
            <person name="Vos P."/>
            <person name="Hoheisel J."/>
            <person name="Zimmermann W."/>
            <person name="Wedler H."/>
            <person name="Ridley P."/>
            <person name="Langham S.-A."/>
            <person name="McCullagh B."/>
            <person name="Bilham L."/>
            <person name="Robben J."/>
            <person name="van der Schueren J."/>
            <person name="Grymonprez B."/>
            <person name="Chuang Y.-J."/>
            <person name="Vandenbussche F."/>
            <person name="Braeken M."/>
            <person name="Weltjens I."/>
            <person name="Voet M."/>
            <person name="Bastiaens I."/>
            <person name="Aert R."/>
            <person name="Defoor E."/>
            <person name="Weitzenegger T."/>
            <person name="Bothe G."/>
            <person name="Ramsperger U."/>
            <person name="Hilbert H."/>
            <person name="Braun M."/>
            <person name="Holzer E."/>
            <person name="Brandt A."/>
            <person name="Peters S."/>
            <person name="van Staveren M."/>
            <person name="Dirkse W."/>
            <person name="Mooijman P."/>
            <person name="Klein Lankhorst R."/>
            <person name="Rose M."/>
            <person name="Hauf J."/>
            <person name="Koetter P."/>
            <person name="Berneiser S."/>
            <person name="Hempel S."/>
            <person name="Feldpausch M."/>
            <person name="Lamberth S."/>
            <person name="Van den Daele H."/>
            <person name="De Keyser A."/>
            <person name="Buysshaert C."/>
            <person name="Gielen J."/>
            <person name="Villarroel R."/>
            <person name="De Clercq R."/>
            <person name="van Montagu M."/>
            <person name="Rogers J."/>
            <person name="Cronin A."/>
            <person name="Quail M.A."/>
            <person name="Bray-Allen S."/>
            <person name="Clark L."/>
            <person name="Doggett J."/>
            <person name="Hall S."/>
            <person name="Kay M."/>
            <person name="Lennard N."/>
            <person name="McLay K."/>
            <person name="Mayes R."/>
            <person name="Pettett A."/>
            <person name="Rajandream M.A."/>
            <person name="Lyne M."/>
            <person name="Benes V."/>
            <person name="Rechmann S."/>
            <person name="Borkova D."/>
            <person name="Bloecker H."/>
            <person name="Scharfe M."/>
            <person name="Grimm M."/>
            <person name="Loehnert T.-H."/>
            <person name="Dose S."/>
            <person name="de Haan M."/>
            <person name="Maarse A.C."/>
            <person name="Schaefer M."/>
            <person name="Mueller-Auer S."/>
            <person name="Gabel C."/>
            <person name="Fuchs M."/>
            <person name="Fartmann B."/>
            <person name="Granderath K."/>
            <person name="Dauner D."/>
            <person name="Herzl A."/>
            <person name="Neumann S."/>
            <person name="Argiriou A."/>
            <person name="Vitale D."/>
            <person name="Liguori R."/>
            <person name="Piravandi E."/>
            <person name="Massenet O."/>
            <person name="Quigley F."/>
            <person name="Clabauld G."/>
            <person name="Muendlein A."/>
            <person name="Felber R."/>
            <person name="Schnabl S."/>
            <person name="Hiller R."/>
            <person name="Schmidt W."/>
            <person name="Lecharny A."/>
            <person name="Aubourg S."/>
            <person name="Chefdor F."/>
            <person name="Cooke R."/>
            <person name="Berger C."/>
            <person name="Monfort A."/>
            <person name="Casacuberta E."/>
            <person name="Gibbons T."/>
            <person name="Weber N."/>
            <person name="Vandenbol M."/>
            <person name="Bargues M."/>
            <person name="Terol J."/>
            <person name="Torres A."/>
            <person name="Perez-Perez A."/>
            <person name="Purnelle B."/>
            <person name="Bent E."/>
            <person name="Johnson S."/>
            <person name="Tacon D."/>
            <person name="Jesse T."/>
            <person name="Heijnen L."/>
            <person name="Schwarz S."/>
            <person name="Scholler P."/>
            <person name="Heber S."/>
            <person name="Francs P."/>
            <person name="Bielke C."/>
            <person name="Frishman D."/>
            <person name="Haase D."/>
            <person name="Lemcke K."/>
            <person name="Mewes H.-W."/>
            <person name="Stocker S."/>
            <person name="Zaccaria P."/>
            <person name="Bevan M."/>
            <person name="Wilson R.K."/>
            <person name="de la Bastide M."/>
            <person name="Habermann K."/>
            <person name="Parnell L."/>
            <person name="Dedhia N."/>
            <person name="Gnoj L."/>
            <person name="Schutz K."/>
            <person name="Huang E."/>
            <person name="Spiegel L."/>
            <person name="Sekhon M."/>
            <person name="Murray J."/>
            <person name="Sheet P."/>
            <person name="Cordes M."/>
            <person name="Abu-Threideh J."/>
            <person name="Stoneking T."/>
            <person name="Kalicki J."/>
            <person name="Graves T."/>
            <person name="Harmon G."/>
            <person name="Edwards J."/>
            <person name="Latreille P."/>
            <person name="Courtney L."/>
            <person name="Cloud J."/>
            <person name="Abbott A."/>
            <person name="Scott K."/>
            <person name="Johnson D."/>
            <person name="Minx P."/>
            <person name="Bentley D."/>
            <person name="Fulton B."/>
            <person name="Miller N."/>
            <person name="Greco T."/>
            <person name="Kemp K."/>
            <person name="Kramer J."/>
            <person name="Fulton L."/>
            <person name="Mardis E."/>
            <person name="Dante M."/>
            <person name="Pepin K."/>
            <person name="Hillier L.W."/>
            <person name="Nelson J."/>
            <person name="Spieth J."/>
            <person name="Ryan E."/>
            <person name="Andrews S."/>
            <person name="Geisel C."/>
            <person name="Layman D."/>
            <person name="Du H."/>
            <person name="Ali J."/>
            <person name="Berghoff A."/>
            <person name="Jones K."/>
            <person name="Drone K."/>
            <person name="Cotton M."/>
            <person name="Joshu C."/>
            <person name="Antonoiu B."/>
            <person name="Zidanic M."/>
            <person name="Strong C."/>
            <person name="Sun H."/>
            <person name="Lamar B."/>
            <person name="Yordan C."/>
            <person name="Ma P."/>
            <person name="Zhong J."/>
            <person name="Preston R."/>
            <person name="Vil D."/>
            <person name="Shekher M."/>
            <person name="Matero A."/>
            <person name="Shah R."/>
            <person name="Swaby I.K."/>
            <person name="O'Shaughnessy A."/>
            <person name="Rodriguez M."/>
            <person name="Hoffman J."/>
            <person name="Till S."/>
            <person name="Granat S."/>
            <person name="Shohdy N."/>
            <person name="Hasegawa A."/>
            <person name="Hameed A."/>
            <person name="Lodhi M."/>
            <person name="Johnson A."/>
            <person name="Chen E."/>
            <person name="Marra M.A."/>
            <person name="Martienssen R."/>
            <person name="McCombie W.R."/>
        </authorList>
    </citation>
    <scope>NUCLEOTIDE SEQUENCE [LARGE SCALE GENOMIC DNA]</scope>
    <source>
        <strain>cv. Columbia</strain>
    </source>
</reference>
<reference key="4">
    <citation type="journal article" date="2017" name="Plant J.">
        <title>Araport11: a complete reannotation of the Arabidopsis thaliana reference genome.</title>
        <authorList>
            <person name="Cheng C.Y."/>
            <person name="Krishnakumar V."/>
            <person name="Chan A.P."/>
            <person name="Thibaud-Nissen F."/>
            <person name="Schobel S."/>
            <person name="Town C.D."/>
        </authorList>
    </citation>
    <scope>GENOME REANNOTATION</scope>
    <source>
        <strain>cv. Columbia</strain>
    </source>
</reference>
<reference key="5">
    <citation type="journal article" date="2003" name="Science">
        <title>Empirical analysis of transcriptional activity in the Arabidopsis genome.</title>
        <authorList>
            <person name="Yamada K."/>
            <person name="Lim J."/>
            <person name="Dale J.M."/>
            <person name="Chen H."/>
            <person name="Shinn P."/>
            <person name="Palm C.J."/>
            <person name="Southwick A.M."/>
            <person name="Wu H.C."/>
            <person name="Kim C.J."/>
            <person name="Nguyen M."/>
            <person name="Pham P.K."/>
            <person name="Cheuk R.F."/>
            <person name="Karlin-Newmann G."/>
            <person name="Liu S.X."/>
            <person name="Lam B."/>
            <person name="Sakano H."/>
            <person name="Wu T."/>
            <person name="Yu G."/>
            <person name="Miranda M."/>
            <person name="Quach H.L."/>
            <person name="Tripp M."/>
            <person name="Chang C.H."/>
            <person name="Lee J.M."/>
            <person name="Toriumi M.J."/>
            <person name="Chan M.M."/>
            <person name="Tang C.C."/>
            <person name="Onodera C.S."/>
            <person name="Deng J.M."/>
            <person name="Akiyama K."/>
            <person name="Ansari Y."/>
            <person name="Arakawa T."/>
            <person name="Banh J."/>
            <person name="Banno F."/>
            <person name="Bowser L."/>
            <person name="Brooks S.Y."/>
            <person name="Carninci P."/>
            <person name="Chao Q."/>
            <person name="Choy N."/>
            <person name="Enju A."/>
            <person name="Goldsmith A.D."/>
            <person name="Gurjal M."/>
            <person name="Hansen N.F."/>
            <person name="Hayashizaki Y."/>
            <person name="Johnson-Hopson C."/>
            <person name="Hsuan V.W."/>
            <person name="Iida K."/>
            <person name="Karnes M."/>
            <person name="Khan S."/>
            <person name="Koesema E."/>
            <person name="Ishida J."/>
            <person name="Jiang P.X."/>
            <person name="Jones T."/>
            <person name="Kawai J."/>
            <person name="Kamiya A."/>
            <person name="Meyers C."/>
            <person name="Nakajima M."/>
            <person name="Narusaka M."/>
            <person name="Seki M."/>
            <person name="Sakurai T."/>
            <person name="Satou M."/>
            <person name="Tamse R."/>
            <person name="Vaysberg M."/>
            <person name="Wallender E.K."/>
            <person name="Wong C."/>
            <person name="Yamamura Y."/>
            <person name="Yuan S."/>
            <person name="Shinozaki K."/>
            <person name="Davis R.W."/>
            <person name="Theologis A."/>
            <person name="Ecker J.R."/>
        </authorList>
    </citation>
    <scope>NUCLEOTIDE SEQUENCE [LARGE SCALE MRNA]</scope>
    <source>
        <strain>cv. Columbia</strain>
    </source>
</reference>
<reference key="6">
    <citation type="journal article" date="2009" name="DNA Res.">
        <title>Analysis of multiple occurrences of alternative splicing events in Arabidopsis thaliana using novel sequenced full-length cDNAs.</title>
        <authorList>
            <person name="Iida K."/>
            <person name="Fukami-Kobayashi K."/>
            <person name="Toyoda A."/>
            <person name="Sakaki Y."/>
            <person name="Kobayashi M."/>
            <person name="Seki M."/>
            <person name="Shinozaki K."/>
        </authorList>
    </citation>
    <scope>NUCLEOTIDE SEQUENCE [LARGE SCALE MRNA]</scope>
    <source>
        <strain>cv. Columbia</strain>
        <tissue>Rosette leaf</tissue>
    </source>
</reference>
<reference key="7">
    <citation type="journal article" date="2006" name="Plant Cell">
        <title>The essential nature of sphingolipids in plants as revealed by the functional identification and characterization of the Arabidopsis LCB1 subunit of serine palmitoyltransferase.</title>
        <authorList>
            <person name="Chen M."/>
            <person name="Han G."/>
            <person name="Dietrich C.R."/>
            <person name="Dunn T.M."/>
            <person name="Cahoon E.B."/>
        </authorList>
    </citation>
    <scope>FUNCTION</scope>
    <scope>DISRUPTION PHENOTYPE</scope>
    <scope>TISSUE SPECIFICITY</scope>
    <scope>SUBCELLULAR LOCATION</scope>
    <scope>SUBUNIT</scope>
</reference>
<reference key="8">
    <citation type="journal article" date="2007" name="Cell Res.">
        <title>Involvement of sphingoid bases in mediating reactive oxygen intermediate production and programmed cell death in Arabidopsis.</title>
        <authorList>
            <person name="Shi L."/>
            <person name="Bielawski J."/>
            <person name="Mu J."/>
            <person name="Dong H."/>
            <person name="Teng C."/>
            <person name="Zhang J."/>
            <person name="Yang X."/>
            <person name="Tomishige N."/>
            <person name="Hanada K."/>
            <person name="Hannun Y.A."/>
            <person name="Zuo J."/>
        </authorList>
    </citation>
    <scope>FUNCTION</scope>
</reference>
<reference key="9">
    <citation type="journal article" date="2008" name="Plant Physiol.">
        <title>Serine palmitoyltransferase, a key enzyme for de novo synthesis of sphingolipids, is essential for male gametophyte development in Arabidopsis.</title>
        <authorList>
            <person name="Teng C."/>
            <person name="Dong H."/>
            <person name="Shi L."/>
            <person name="Deng Y."/>
            <person name="Mu J."/>
            <person name="Zhang J."/>
            <person name="Yang X."/>
            <person name="Zuo J."/>
        </authorList>
    </citation>
    <scope>FUNCTION</scope>
    <scope>DISRUPTION PHENOTYPE</scope>
</reference>
<evidence type="ECO:0000250" key="1"/>
<evidence type="ECO:0000255" key="2"/>
<evidence type="ECO:0000269" key="3">
    <source>
    </source>
</evidence>
<evidence type="ECO:0000269" key="4">
    <source>
    </source>
</evidence>
<evidence type="ECO:0000269" key="5">
    <source>
    </source>
</evidence>
<evidence type="ECO:0000305" key="6"/>
<evidence type="ECO:0007829" key="7">
    <source>
        <dbReference type="PDB" id="7YJK"/>
    </source>
</evidence>
<accession>Q94IB8</accession>
<accession>B9DHA0</accession>
<accession>O23233</accession>